<reference evidence="7" key="1">
    <citation type="journal article" date="2004" name="Nature">
        <title>Genome sequence of the Brown Norway rat yields insights into mammalian evolution.</title>
        <authorList>
            <person name="Gibbs R.A."/>
            <person name="Weinstock G.M."/>
            <person name="Metzker M.L."/>
            <person name="Muzny D.M."/>
            <person name="Sodergren E.J."/>
            <person name="Scherer S."/>
            <person name="Scott G."/>
            <person name="Steffen D."/>
            <person name="Worley K.C."/>
            <person name="Burch P.E."/>
            <person name="Okwuonu G."/>
            <person name="Hines S."/>
            <person name="Lewis L."/>
            <person name="Deramo C."/>
            <person name="Delgado O."/>
            <person name="Dugan-Rocha S."/>
            <person name="Miner G."/>
            <person name="Morgan M."/>
            <person name="Hawes A."/>
            <person name="Gill R."/>
            <person name="Holt R.A."/>
            <person name="Adams M.D."/>
            <person name="Amanatides P.G."/>
            <person name="Baden-Tillson H."/>
            <person name="Barnstead M."/>
            <person name="Chin S."/>
            <person name="Evans C.A."/>
            <person name="Ferriera S."/>
            <person name="Fosler C."/>
            <person name="Glodek A."/>
            <person name="Gu Z."/>
            <person name="Jennings D."/>
            <person name="Kraft C.L."/>
            <person name="Nguyen T."/>
            <person name="Pfannkoch C.M."/>
            <person name="Sitter C."/>
            <person name="Sutton G.G."/>
            <person name="Venter J.C."/>
            <person name="Woodage T."/>
            <person name="Smith D."/>
            <person name="Lee H.-M."/>
            <person name="Gustafson E."/>
            <person name="Cahill P."/>
            <person name="Kana A."/>
            <person name="Doucette-Stamm L."/>
            <person name="Weinstock K."/>
            <person name="Fechtel K."/>
            <person name="Weiss R.B."/>
            <person name="Dunn D.M."/>
            <person name="Green E.D."/>
            <person name="Blakesley R.W."/>
            <person name="Bouffard G.G."/>
            <person name="De Jong P.J."/>
            <person name="Osoegawa K."/>
            <person name="Zhu B."/>
            <person name="Marra M."/>
            <person name="Schein J."/>
            <person name="Bosdet I."/>
            <person name="Fjell C."/>
            <person name="Jones S."/>
            <person name="Krzywinski M."/>
            <person name="Mathewson C."/>
            <person name="Siddiqui A."/>
            <person name="Wye N."/>
            <person name="McPherson J."/>
            <person name="Zhao S."/>
            <person name="Fraser C.M."/>
            <person name="Shetty J."/>
            <person name="Shatsman S."/>
            <person name="Geer K."/>
            <person name="Chen Y."/>
            <person name="Abramzon S."/>
            <person name="Nierman W.C."/>
            <person name="Havlak P.H."/>
            <person name="Chen R."/>
            <person name="Durbin K.J."/>
            <person name="Egan A."/>
            <person name="Ren Y."/>
            <person name="Song X.-Z."/>
            <person name="Li B."/>
            <person name="Liu Y."/>
            <person name="Qin X."/>
            <person name="Cawley S."/>
            <person name="Cooney A.J."/>
            <person name="D'Souza L.M."/>
            <person name="Martin K."/>
            <person name="Wu J.Q."/>
            <person name="Gonzalez-Garay M.L."/>
            <person name="Jackson A.R."/>
            <person name="Kalafus K.J."/>
            <person name="McLeod M.P."/>
            <person name="Milosavljevic A."/>
            <person name="Virk D."/>
            <person name="Volkov A."/>
            <person name="Wheeler D.A."/>
            <person name="Zhang Z."/>
            <person name="Bailey J.A."/>
            <person name="Eichler E.E."/>
            <person name="Tuzun E."/>
            <person name="Birney E."/>
            <person name="Mongin E."/>
            <person name="Ureta-Vidal A."/>
            <person name="Woodwark C."/>
            <person name="Zdobnov E."/>
            <person name="Bork P."/>
            <person name="Suyama M."/>
            <person name="Torrents D."/>
            <person name="Alexandersson M."/>
            <person name="Trask B.J."/>
            <person name="Young J.M."/>
            <person name="Huang H."/>
            <person name="Wang H."/>
            <person name="Xing H."/>
            <person name="Daniels S."/>
            <person name="Gietzen D."/>
            <person name="Schmidt J."/>
            <person name="Stevens K."/>
            <person name="Vitt U."/>
            <person name="Wingrove J."/>
            <person name="Camara F."/>
            <person name="Mar Alba M."/>
            <person name="Abril J.F."/>
            <person name="Guigo R."/>
            <person name="Smit A."/>
            <person name="Dubchak I."/>
            <person name="Rubin E.M."/>
            <person name="Couronne O."/>
            <person name="Poliakov A."/>
            <person name="Huebner N."/>
            <person name="Ganten D."/>
            <person name="Goesele C."/>
            <person name="Hummel O."/>
            <person name="Kreitler T."/>
            <person name="Lee Y.-A."/>
            <person name="Monti J."/>
            <person name="Schulz H."/>
            <person name="Zimdahl H."/>
            <person name="Himmelbauer H."/>
            <person name="Lehrach H."/>
            <person name="Jacob H.J."/>
            <person name="Bromberg S."/>
            <person name="Gullings-Handley J."/>
            <person name="Jensen-Seaman M.I."/>
            <person name="Kwitek A.E."/>
            <person name="Lazar J."/>
            <person name="Pasko D."/>
            <person name="Tonellato P.J."/>
            <person name="Twigger S."/>
            <person name="Ponting C.P."/>
            <person name="Duarte J.M."/>
            <person name="Rice S."/>
            <person name="Goodstadt L."/>
            <person name="Beatson S.A."/>
            <person name="Emes R.D."/>
            <person name="Winter E.E."/>
            <person name="Webber C."/>
            <person name="Brandt P."/>
            <person name="Nyakatura G."/>
            <person name="Adetobi M."/>
            <person name="Chiaromonte F."/>
            <person name="Elnitski L."/>
            <person name="Eswara P."/>
            <person name="Hardison R.C."/>
            <person name="Hou M."/>
            <person name="Kolbe D."/>
            <person name="Makova K."/>
            <person name="Miller W."/>
            <person name="Nekrutenko A."/>
            <person name="Riemer C."/>
            <person name="Schwartz S."/>
            <person name="Taylor J."/>
            <person name="Yang S."/>
            <person name="Zhang Y."/>
            <person name="Lindpaintner K."/>
            <person name="Andrews T.D."/>
            <person name="Caccamo M."/>
            <person name="Clamp M."/>
            <person name="Clarke L."/>
            <person name="Curwen V."/>
            <person name="Durbin R.M."/>
            <person name="Eyras E."/>
            <person name="Searle S.M."/>
            <person name="Cooper G.M."/>
            <person name="Batzoglou S."/>
            <person name="Brudno M."/>
            <person name="Sidow A."/>
            <person name="Stone E.A."/>
            <person name="Payseur B.A."/>
            <person name="Bourque G."/>
            <person name="Lopez-Otin C."/>
            <person name="Puente X.S."/>
            <person name="Chakrabarti K."/>
            <person name="Chatterji S."/>
            <person name="Dewey C."/>
            <person name="Pachter L."/>
            <person name="Bray N."/>
            <person name="Yap V.B."/>
            <person name="Caspi A."/>
            <person name="Tesler G."/>
            <person name="Pevzner P.A."/>
            <person name="Haussler D."/>
            <person name="Roskin K.M."/>
            <person name="Baertsch R."/>
            <person name="Clawson H."/>
            <person name="Furey T.S."/>
            <person name="Hinrichs A.S."/>
            <person name="Karolchik D."/>
            <person name="Kent W.J."/>
            <person name="Rosenbloom K.R."/>
            <person name="Trumbower H."/>
            <person name="Weirauch M."/>
            <person name="Cooper D.N."/>
            <person name="Stenson P.D."/>
            <person name="Ma B."/>
            <person name="Brent M."/>
            <person name="Arumugam M."/>
            <person name="Shteynberg D."/>
            <person name="Copley R.R."/>
            <person name="Taylor M.S."/>
            <person name="Riethman H."/>
            <person name="Mudunuri U."/>
            <person name="Peterson J."/>
            <person name="Guyer M."/>
            <person name="Felsenfeld A."/>
            <person name="Old S."/>
            <person name="Mockrin S."/>
            <person name="Collins F.S."/>
        </authorList>
    </citation>
    <scope>NUCLEOTIDE SEQUENCE [LARGE SCALE GENOMIC DNA]</scope>
    <source>
        <strain evidence="7">Brown Norway</strain>
    </source>
</reference>
<reference evidence="6" key="2">
    <citation type="submission" date="2005-09" db="EMBL/GenBank/DDBJ databases">
        <authorList>
            <person name="Mural R.J."/>
            <person name="Adams M.D."/>
            <person name="Myers E.W."/>
            <person name="Smith H.O."/>
            <person name="Venter J.C."/>
        </authorList>
    </citation>
    <scope>NUCLEOTIDE SEQUENCE [LARGE SCALE GENOMIC DNA]</scope>
</reference>
<reference key="3">
    <citation type="journal article" date="2004" name="Genome Res.">
        <title>The status, quality, and expansion of the NIH full-length cDNA project: the Mammalian Gene Collection (MGC).</title>
        <authorList>
            <consortium name="The MGC Project Team"/>
        </authorList>
    </citation>
    <scope>NUCLEOTIDE SEQUENCE [LARGE SCALE MRNA]</scope>
    <source>
        <tissue>Testis</tissue>
    </source>
</reference>
<reference key="4">
    <citation type="journal article" date="2009" name="Genes Cells">
        <title>hnRNP K interacts with RNA binding motif protein 42 and functions in the maintenance of cellular ATP level during stress conditions.</title>
        <authorList>
            <person name="Fukuda T."/>
            <person name="Naiki T."/>
            <person name="Saito M."/>
            <person name="Irie K."/>
        </authorList>
    </citation>
    <scope>FUNCTION</scope>
    <scope>INTERACTION WITH HNRNPK</scope>
    <scope>RNA-BINDING</scope>
    <scope>SUBCELLULAR LOCATION</scope>
</reference>
<proteinExistence type="evidence at protein level"/>
<dbReference type="EMBL" id="AC141526">
    <property type="status" value="NOT_ANNOTATED_CDS"/>
    <property type="molecule type" value="Genomic_DNA"/>
</dbReference>
<dbReference type="EMBL" id="CH473979">
    <property type="protein sequence ID" value="EDM07728.1"/>
    <property type="molecule type" value="Genomic_DNA"/>
</dbReference>
<dbReference type="EMBL" id="BC079321">
    <property type="protein sequence ID" value="AAH79321.1"/>
    <property type="status" value="ALT_INIT"/>
    <property type="molecule type" value="mRNA"/>
</dbReference>
<dbReference type="RefSeq" id="NP_001014181.2">
    <property type="nucleotide sequence ID" value="NM_001014159.2"/>
</dbReference>
<dbReference type="SMR" id="Q6AXT7"/>
<dbReference type="FunCoup" id="Q6AXT7">
    <property type="interactions" value="2537"/>
</dbReference>
<dbReference type="STRING" id="10116.ENSRNOP00000029729"/>
<dbReference type="iPTMnet" id="Q6AXT7"/>
<dbReference type="PhosphoSitePlus" id="Q6AXT7"/>
<dbReference type="jPOST" id="Q6AXT7"/>
<dbReference type="PaxDb" id="10116-ENSRNOP00000029729"/>
<dbReference type="Ensembl" id="ENSRNOT00000031254.4">
    <property type="protein sequence ID" value="ENSRNOP00000029729.3"/>
    <property type="gene ID" value="ENSRNOG00000024278.5"/>
</dbReference>
<dbReference type="GeneID" id="361545"/>
<dbReference type="KEGG" id="rno:361545"/>
<dbReference type="UCSC" id="RGD:1306184">
    <property type="organism name" value="rat"/>
</dbReference>
<dbReference type="AGR" id="RGD:1306184"/>
<dbReference type="CTD" id="79171"/>
<dbReference type="RGD" id="1306184">
    <property type="gene designation" value="Rbm42"/>
</dbReference>
<dbReference type="eggNOG" id="KOG0226">
    <property type="taxonomic scope" value="Eukaryota"/>
</dbReference>
<dbReference type="GeneTree" id="ENSGT00930000151055"/>
<dbReference type="InParanoid" id="Q6AXT7"/>
<dbReference type="OMA" id="QRMPMMR"/>
<dbReference type="OrthoDB" id="1749473at2759"/>
<dbReference type="PhylomeDB" id="Q6AXT7"/>
<dbReference type="TreeFam" id="TF313946"/>
<dbReference type="Reactome" id="R-RNO-72163">
    <property type="pathway name" value="mRNA Splicing - Major Pathway"/>
</dbReference>
<dbReference type="PRO" id="PR:Q6AXT7"/>
<dbReference type="Proteomes" id="UP000002494">
    <property type="component" value="Chromosome 1"/>
</dbReference>
<dbReference type="Proteomes" id="UP000234681">
    <property type="component" value="Chromosome 1"/>
</dbReference>
<dbReference type="Bgee" id="ENSRNOG00000024278">
    <property type="expression patterns" value="Expressed in thymus and 19 other cell types or tissues"/>
</dbReference>
<dbReference type="GO" id="GO:0005737">
    <property type="term" value="C:cytoplasm"/>
    <property type="evidence" value="ECO:0007669"/>
    <property type="project" value="UniProtKB-SubCell"/>
</dbReference>
<dbReference type="GO" id="GO:0046540">
    <property type="term" value="C:U4/U6 x U5 tri-snRNP complex"/>
    <property type="evidence" value="ECO:0000266"/>
    <property type="project" value="RGD"/>
</dbReference>
<dbReference type="GO" id="GO:0003729">
    <property type="term" value="F:mRNA binding"/>
    <property type="evidence" value="ECO:0000318"/>
    <property type="project" value="GO_Central"/>
</dbReference>
<dbReference type="GO" id="GO:0048025">
    <property type="term" value="P:negative regulation of mRNA splicing, via spliceosome"/>
    <property type="evidence" value="ECO:0000266"/>
    <property type="project" value="RGD"/>
</dbReference>
<dbReference type="CDD" id="cd12383">
    <property type="entry name" value="RRM_RBM42"/>
    <property type="match status" value="1"/>
</dbReference>
<dbReference type="FunFam" id="3.30.70.330:FF:000189">
    <property type="entry name" value="RNA-binding protein 42 isoform X2"/>
    <property type="match status" value="1"/>
</dbReference>
<dbReference type="Gene3D" id="3.30.70.330">
    <property type="match status" value="1"/>
</dbReference>
<dbReference type="InterPro" id="IPR012677">
    <property type="entry name" value="Nucleotide-bd_a/b_plait_sf"/>
</dbReference>
<dbReference type="InterPro" id="IPR035979">
    <property type="entry name" value="RBD_domain_sf"/>
</dbReference>
<dbReference type="InterPro" id="IPR050825">
    <property type="entry name" value="RBM42_RBP45_47-like"/>
</dbReference>
<dbReference type="InterPro" id="IPR034215">
    <property type="entry name" value="RBM42_RRM"/>
</dbReference>
<dbReference type="InterPro" id="IPR000504">
    <property type="entry name" value="RRM_dom"/>
</dbReference>
<dbReference type="PANTHER" id="PTHR47640:SF11">
    <property type="entry name" value="RNA-BINDING PROTEIN 42"/>
    <property type="match status" value="1"/>
</dbReference>
<dbReference type="PANTHER" id="PTHR47640">
    <property type="entry name" value="TRNA SELENOCYSTEINE 1-ASSOCIATED PROTEIN 1-RELATED-RELATED"/>
    <property type="match status" value="1"/>
</dbReference>
<dbReference type="Pfam" id="PF00076">
    <property type="entry name" value="RRM_1"/>
    <property type="match status" value="1"/>
</dbReference>
<dbReference type="SMART" id="SM00360">
    <property type="entry name" value="RRM"/>
    <property type="match status" value="1"/>
</dbReference>
<dbReference type="SUPFAM" id="SSF54928">
    <property type="entry name" value="RNA-binding domain, RBD"/>
    <property type="match status" value="1"/>
</dbReference>
<dbReference type="PROSITE" id="PS50102">
    <property type="entry name" value="RRM"/>
    <property type="match status" value="1"/>
</dbReference>
<feature type="initiator methionine" description="Removed" evidence="5">
    <location>
        <position position="1"/>
    </location>
</feature>
<feature type="chain" id="PRO_0000307752" description="RNA-binding protein 42">
    <location>
        <begin position="2"/>
        <end position="478"/>
    </location>
</feature>
<feature type="domain" description="RRM" evidence="2">
    <location>
        <begin position="379"/>
        <end position="457"/>
    </location>
</feature>
<feature type="region of interest" description="Disordered" evidence="3">
    <location>
        <begin position="1"/>
        <end position="33"/>
    </location>
</feature>
<feature type="region of interest" description="Disordered" evidence="3">
    <location>
        <begin position="171"/>
        <end position="209"/>
    </location>
</feature>
<feature type="region of interest" description="Necessary for interaction with HNRNPK" evidence="4">
    <location>
        <begin position="234"/>
        <end position="478"/>
    </location>
</feature>
<feature type="region of interest" description="Disordered" evidence="3">
    <location>
        <begin position="317"/>
        <end position="354"/>
    </location>
</feature>
<feature type="compositionally biased region" description="Low complexity" evidence="3">
    <location>
        <begin position="1"/>
        <end position="20"/>
    </location>
</feature>
<feature type="compositionally biased region" description="Pro residues" evidence="3">
    <location>
        <begin position="193"/>
        <end position="205"/>
    </location>
</feature>
<feature type="compositionally biased region" description="Basic and acidic residues" evidence="3">
    <location>
        <begin position="343"/>
        <end position="354"/>
    </location>
</feature>
<feature type="modified residue" description="N-acetylalanine" evidence="5">
    <location>
        <position position="2"/>
    </location>
</feature>
<feature type="modified residue" description="Phosphoserine" evidence="1">
    <location>
        <position position="133"/>
    </location>
</feature>
<feature type="modified residue" description="Asymmetric dimethylarginine" evidence="1">
    <location>
        <position position="151"/>
    </location>
</feature>
<feature type="modified residue" description="Asymmetric dimethylarginine" evidence="1">
    <location>
        <position position="156"/>
    </location>
</feature>
<feature type="modified residue" description="Asymmetric dimethylarginine" evidence="1">
    <location>
        <position position="166"/>
    </location>
</feature>
<feature type="modified residue" description="Asymmetric dimethylarginine" evidence="1">
    <location>
        <position position="179"/>
    </location>
</feature>
<keyword id="KW-0007">Acetylation</keyword>
<keyword id="KW-0963">Cytoplasm</keyword>
<keyword id="KW-0488">Methylation</keyword>
<keyword id="KW-0539">Nucleus</keyword>
<keyword id="KW-0597">Phosphoprotein</keyword>
<keyword id="KW-1185">Reference proteome</keyword>
<keyword id="KW-0694">RNA-binding</keyword>
<accession>Q6AXT7</accession>
<accession>G3V8X1</accession>
<name>RBM42_RAT</name>
<organism>
    <name type="scientific">Rattus norvegicus</name>
    <name type="common">Rat</name>
    <dbReference type="NCBI Taxonomy" id="10116"/>
    <lineage>
        <taxon>Eukaryota</taxon>
        <taxon>Metazoa</taxon>
        <taxon>Chordata</taxon>
        <taxon>Craniata</taxon>
        <taxon>Vertebrata</taxon>
        <taxon>Euteleostomi</taxon>
        <taxon>Mammalia</taxon>
        <taxon>Eutheria</taxon>
        <taxon>Euarchontoglires</taxon>
        <taxon>Glires</taxon>
        <taxon>Rodentia</taxon>
        <taxon>Myomorpha</taxon>
        <taxon>Muroidea</taxon>
        <taxon>Muridae</taxon>
        <taxon>Murinae</taxon>
        <taxon>Rattus</taxon>
    </lineage>
</organism>
<gene>
    <name type="primary">Rbm42</name>
</gene>
<sequence length="478" mass="50266">MASAMAGAGPAPGLPVAGGPVVPGPGVGIPGKSGEERLKEMEAEMALFEQEVLGAPVTGIPTAVPAVPTVEAMQVPPAPVIRPIIATNTYQQVQQTLEARAAAAATVVPPMVGGPPFVGPVGFGPADRSHLDSPEAREAMFLRRAAVAPQRAPILRPAFVPHVLQRADSALSSAAGGPRPMALRPPHQALVGPPLPGPPGPPMMLPPMARAPGPPLGSMAALRPPLEEPAAPRDLGLGLGLGLKEKEEAVVAAAAGLEEASAAVAVGAGGAPAGPAVIGPSLPLALAMPLPEPEPLPLPLEVVRGLLPPLRIPELLSLRPRPRPPRPEPPPGLMALEVPEPLGEDKKKGKPEKLKRCIRTAAGSSWEDPSLLEWDADDFRIFCGDLGNEVNDDILARAFSRFPSFLKAKVIRDKRTGKTKGYGFVSFKDPSDYVRAMREMNGKYVGSRPIKLRKSMWKDRNLDVVRKKQKEKKKLGLR</sequence>
<protein>
    <recommendedName>
        <fullName>RNA-binding protein 42</fullName>
    </recommendedName>
    <alternativeName>
        <fullName>RNA-binding motif protein 42</fullName>
    </alternativeName>
</protein>
<evidence type="ECO:0000250" key="1">
    <source>
        <dbReference type="UniProtKB" id="Q9BTD8"/>
    </source>
</evidence>
<evidence type="ECO:0000255" key="2">
    <source>
        <dbReference type="PROSITE-ProRule" id="PRU00176"/>
    </source>
</evidence>
<evidence type="ECO:0000256" key="3">
    <source>
        <dbReference type="SAM" id="MobiDB-lite"/>
    </source>
</evidence>
<evidence type="ECO:0000269" key="4">
    <source>
    </source>
</evidence>
<evidence type="ECO:0000305" key="5"/>
<evidence type="ECO:0000312" key="6">
    <source>
        <dbReference type="EMBL" id="EDM07728.1"/>
    </source>
</evidence>
<evidence type="ECO:0000312" key="7">
    <source>
        <dbReference type="Proteomes" id="UP000002494"/>
    </source>
</evidence>
<comment type="function">
    <text evidence="4">Binds (via the RRM domain) to the 3' untranslated region (UTR) of p21 mRNA.</text>
</comment>
<comment type="subunit">
    <text evidence="4">Interacts with HNRNPK.</text>
</comment>
<comment type="subcellular location">
    <subcellularLocation>
        <location evidence="4">Nucleus</location>
    </subcellularLocation>
    <subcellularLocation>
        <location evidence="4">Cytoplasm</location>
    </subcellularLocation>
    <text>Upon stress response, localizes with HNRNPK in cytoplasmic aggregates of stalled translational preinitiation complexes called stress granules.</text>
</comment>
<comment type="similarity">
    <text evidence="5">Belongs to the RRM RBM42 family.</text>
</comment>
<comment type="sequence caution" evidence="5">
    <conflict type="erroneous initiation">
        <sequence resource="EMBL-CDS" id="AAH79321"/>
    </conflict>
    <text>Truncated N-terminus.</text>
</comment>